<keyword id="KW-0004">4Fe-4S</keyword>
<keyword id="KW-0408">Iron</keyword>
<keyword id="KW-0411">Iron-sulfur</keyword>
<keyword id="KW-0479">Metal-binding</keyword>
<keyword id="KW-0949">S-adenosyl-L-methionine</keyword>
<comment type="cofactor">
    <cofactor evidence="1">
        <name>[4Fe-4S] cluster</name>
        <dbReference type="ChEBI" id="CHEBI:49883"/>
    </cofactor>
    <text evidence="1">Binds 1 [4Fe-4S] cluster. The cluster is coordinated with 3 cysteines and an exchangeable S-adenosyl-L-methionine.</text>
</comment>
<comment type="similarity">
    <text evidence="1">Belongs to the UPF0313 family.</text>
</comment>
<dbReference type="EMBL" id="CP000939">
    <property type="protein sequence ID" value="ACA44151.1"/>
    <property type="molecule type" value="Genomic_DNA"/>
</dbReference>
<dbReference type="RefSeq" id="WP_003398988.1">
    <property type="nucleotide sequence ID" value="NC_010516.1"/>
</dbReference>
<dbReference type="KEGG" id="cbb:CLD_0573"/>
<dbReference type="HOGENOM" id="CLU_018288_2_0_9"/>
<dbReference type="Proteomes" id="UP000008541">
    <property type="component" value="Chromosome"/>
</dbReference>
<dbReference type="GO" id="GO:0051539">
    <property type="term" value="F:4 iron, 4 sulfur cluster binding"/>
    <property type="evidence" value="ECO:0007669"/>
    <property type="project" value="UniProtKB-KW"/>
</dbReference>
<dbReference type="GO" id="GO:0003824">
    <property type="term" value="F:catalytic activity"/>
    <property type="evidence" value="ECO:0007669"/>
    <property type="project" value="InterPro"/>
</dbReference>
<dbReference type="GO" id="GO:0005506">
    <property type="term" value="F:iron ion binding"/>
    <property type="evidence" value="ECO:0007669"/>
    <property type="project" value="UniProtKB-UniRule"/>
</dbReference>
<dbReference type="Gene3D" id="3.80.30.20">
    <property type="entry name" value="tm_1862 like domain"/>
    <property type="match status" value="1"/>
</dbReference>
<dbReference type="HAMAP" id="MF_01251">
    <property type="entry name" value="UPF0313"/>
    <property type="match status" value="1"/>
</dbReference>
<dbReference type="InterPro" id="IPR006638">
    <property type="entry name" value="Elp3/MiaA/NifB-like_rSAM"/>
</dbReference>
<dbReference type="InterPro" id="IPR007197">
    <property type="entry name" value="rSAM"/>
</dbReference>
<dbReference type="InterPro" id="IPR023404">
    <property type="entry name" value="rSAM_horseshoe"/>
</dbReference>
<dbReference type="InterPro" id="IPR022946">
    <property type="entry name" value="UPF0313"/>
</dbReference>
<dbReference type="InterPro" id="IPR024560">
    <property type="entry name" value="UPF0313_C"/>
</dbReference>
<dbReference type="InterPro" id="IPR013704">
    <property type="entry name" value="UPF0313_N"/>
</dbReference>
<dbReference type="NCBIfam" id="TIGR03904">
    <property type="entry name" value="SAM_YgiQ"/>
    <property type="match status" value="1"/>
</dbReference>
<dbReference type="PANTHER" id="PTHR32331">
    <property type="entry name" value="UPF0313 PROTEIN YGIQ"/>
    <property type="match status" value="1"/>
</dbReference>
<dbReference type="PANTHER" id="PTHR32331:SF0">
    <property type="entry name" value="UPF0313 PROTEIN YGIQ"/>
    <property type="match status" value="1"/>
</dbReference>
<dbReference type="Pfam" id="PF11842">
    <property type="entry name" value="DUF3362"/>
    <property type="match status" value="1"/>
</dbReference>
<dbReference type="Pfam" id="PF04055">
    <property type="entry name" value="Radical_SAM"/>
    <property type="match status" value="1"/>
</dbReference>
<dbReference type="Pfam" id="PF08497">
    <property type="entry name" value="Radical_SAM_N"/>
    <property type="match status" value="1"/>
</dbReference>
<dbReference type="SFLD" id="SFLDG01082">
    <property type="entry name" value="B12-binding_domain_containing"/>
    <property type="match status" value="1"/>
</dbReference>
<dbReference type="SFLD" id="SFLDS00029">
    <property type="entry name" value="Radical_SAM"/>
    <property type="match status" value="1"/>
</dbReference>
<dbReference type="SFLD" id="SFLDG01069">
    <property type="entry name" value="UPF0313"/>
    <property type="match status" value="1"/>
</dbReference>
<dbReference type="SMART" id="SM00729">
    <property type="entry name" value="Elp3"/>
    <property type="match status" value="1"/>
</dbReference>
<dbReference type="SUPFAM" id="SSF102114">
    <property type="entry name" value="Radical SAM enzymes"/>
    <property type="match status" value="1"/>
</dbReference>
<dbReference type="PROSITE" id="PS51918">
    <property type="entry name" value="RADICAL_SAM"/>
    <property type="match status" value="1"/>
</dbReference>
<name>Y573_CLOBK</name>
<sequence>MSNMDFLPISKEDLKKRNIDVLDFIIVTGDAYVDHPSFGTAIIGRVLEREGFTVGIIAQPNWNNIEDFKKLGKPKYGFLVNSGNIDSMVNHYTASKKKRHDDFYSPGGKSGYRPDRAVIVYCNKIKEAFKDSPIIIGGIEASLRRFAHYDYWDNSVRRSILEDSSADLLIYGMGEKPIVQVSNLLRYGMKIDSIKNVRGTTYIEKDIFSLKDYIEIPSFEEVSTNKKSYAEAYKIQYYEQDSIRGKTLVQKHKERYVVQNPPQPPLSQEEMDEVYALPYARTYHPMYEAEGGIPAIKEVKFSITSHRGCYGSCSFCALTFHQGRVIQNRSQDSILKEANMMTNMKDFKGYIHDVGGPTANFRHRACKVQEKHGTCKNKQCVFPKACKNLIVDHKEYLSLLRKIRKIPNVKKVFIRSGIRFDYLMYDKNDEFFKELCEHHISGQLKVAPEHISDKVLNLMGKPTRNVYDSFVKKYYDINKKIHKNQFLVPYLMSSHPGSDLKAAIELAQYIKKMGYTPEQVQDFYPTPGSLSTTMYYTGINPLTEEKVYIPKDQKEKRMQRALLQFSIHDNYDLVKEALIKAHREDLIGNGPDCLIPYNKPYKKSHKKNNAKNNNNHYNKNNNKNKDISKKNKKNSLSKHKKRK</sequence>
<reference key="1">
    <citation type="journal article" date="2007" name="PLoS ONE">
        <title>Analysis of the neurotoxin complex genes in Clostridium botulinum A1-A4 and B1 strains: BoNT/A3, /Ba4 and /B1 clusters are located within plasmids.</title>
        <authorList>
            <person name="Smith T.J."/>
            <person name="Hill K.K."/>
            <person name="Foley B.T."/>
            <person name="Detter J.C."/>
            <person name="Munk A.C."/>
            <person name="Bruce D.C."/>
            <person name="Doggett N.A."/>
            <person name="Smith L.A."/>
            <person name="Marks J.D."/>
            <person name="Xie G."/>
            <person name="Brettin T.S."/>
        </authorList>
    </citation>
    <scope>NUCLEOTIDE SEQUENCE [LARGE SCALE GENOMIC DNA]</scope>
    <source>
        <strain>Okra / Type B1</strain>
    </source>
</reference>
<organism>
    <name type="scientific">Clostridium botulinum (strain Okra / Type B1)</name>
    <dbReference type="NCBI Taxonomy" id="498213"/>
    <lineage>
        <taxon>Bacteria</taxon>
        <taxon>Bacillati</taxon>
        <taxon>Bacillota</taxon>
        <taxon>Clostridia</taxon>
        <taxon>Eubacteriales</taxon>
        <taxon>Clostridiaceae</taxon>
        <taxon>Clostridium</taxon>
    </lineage>
</organism>
<feature type="chain" id="PRO_1000139928" description="UPF0313 protein CLD_0573">
    <location>
        <begin position="1"/>
        <end position="643"/>
    </location>
</feature>
<feature type="domain" description="Radical SAM core" evidence="2">
    <location>
        <begin position="295"/>
        <end position="566"/>
    </location>
</feature>
<feature type="region of interest" description="Disordered" evidence="3">
    <location>
        <begin position="598"/>
        <end position="643"/>
    </location>
</feature>
<feature type="compositionally biased region" description="Basic residues" evidence="3">
    <location>
        <begin position="600"/>
        <end position="609"/>
    </location>
</feature>
<feature type="compositionally biased region" description="Low complexity" evidence="3">
    <location>
        <begin position="610"/>
        <end position="621"/>
    </location>
</feature>
<feature type="compositionally biased region" description="Basic residues" evidence="3">
    <location>
        <begin position="630"/>
        <end position="643"/>
    </location>
</feature>
<feature type="binding site" evidence="1">
    <location>
        <position position="309"/>
    </location>
    <ligand>
        <name>[4Fe-4S] cluster</name>
        <dbReference type="ChEBI" id="CHEBI:49883"/>
        <note>4Fe-4S-S-AdoMet</note>
    </ligand>
</feature>
<feature type="binding site" evidence="1">
    <location>
        <position position="313"/>
    </location>
    <ligand>
        <name>[4Fe-4S] cluster</name>
        <dbReference type="ChEBI" id="CHEBI:49883"/>
        <note>4Fe-4S-S-AdoMet</note>
    </ligand>
</feature>
<feature type="binding site" evidence="1">
    <location>
        <position position="316"/>
    </location>
    <ligand>
        <name>[4Fe-4S] cluster</name>
        <dbReference type="ChEBI" id="CHEBI:49883"/>
        <note>4Fe-4S-S-AdoMet</note>
    </ligand>
</feature>
<proteinExistence type="inferred from homology"/>
<gene>
    <name type="ordered locus">CLD_0573</name>
</gene>
<accession>B1ID91</accession>
<protein>
    <recommendedName>
        <fullName evidence="1">UPF0313 protein CLD_0573</fullName>
    </recommendedName>
</protein>
<evidence type="ECO:0000255" key="1">
    <source>
        <dbReference type="HAMAP-Rule" id="MF_01251"/>
    </source>
</evidence>
<evidence type="ECO:0000255" key="2">
    <source>
        <dbReference type="PROSITE-ProRule" id="PRU01266"/>
    </source>
</evidence>
<evidence type="ECO:0000256" key="3">
    <source>
        <dbReference type="SAM" id="MobiDB-lite"/>
    </source>
</evidence>